<feature type="chain" id="PRO_0000449811" description="Protein GET4">
    <location>
        <begin position="1"/>
        <end position="324"/>
    </location>
</feature>
<name>GET4_ARATH</name>
<comment type="function">
    <text evidence="1">Involved in the regulation of root hair growth.</text>
</comment>
<comment type="subunit">
    <text evidence="1">Interacts with GET3A.</text>
</comment>
<comment type="subcellular location">
    <subcellularLocation>
        <location evidence="1">Cytoplasm</location>
        <location evidence="1">Cytosol</location>
    </subcellularLocation>
</comment>
<comment type="disruption phenotype">
    <text evidence="1">Strong reduction of root hair length.</text>
</comment>
<comment type="similarity">
    <text evidence="3">Belongs to the GET4 family.</text>
</comment>
<comment type="sequence caution" evidence="3">
    <conflict type="erroneous gene model prediction">
        <sequence resource="EMBL-CDS" id="BAB10564"/>
    </conflict>
</comment>
<reference key="1">
    <citation type="journal article" date="1997" name="DNA Res.">
        <title>Structural analysis of Arabidopsis thaliana chromosome 5. III. Sequence features of the regions of 1,191,918 bp covered by seventeen physically assigned P1 clones.</title>
        <authorList>
            <person name="Nakamura Y."/>
            <person name="Sato S."/>
            <person name="Kaneko T."/>
            <person name="Kotani H."/>
            <person name="Asamizu E."/>
            <person name="Miyajima N."/>
            <person name="Tabata S."/>
        </authorList>
    </citation>
    <scope>NUCLEOTIDE SEQUENCE [LARGE SCALE GENOMIC DNA]</scope>
    <source>
        <strain>cv. Columbia</strain>
    </source>
</reference>
<reference key="2">
    <citation type="journal article" date="2017" name="Plant J.">
        <title>Araport11: a complete reannotation of the Arabidopsis thaliana reference genome.</title>
        <authorList>
            <person name="Cheng C.Y."/>
            <person name="Krishnakumar V."/>
            <person name="Chan A.P."/>
            <person name="Thibaud-Nissen F."/>
            <person name="Schobel S."/>
            <person name="Town C.D."/>
        </authorList>
    </citation>
    <scope>GENOME REANNOTATION</scope>
    <source>
        <strain>cv. Columbia</strain>
    </source>
</reference>
<reference key="3">
    <citation type="submission" date="2004-06" db="EMBL/GenBank/DDBJ databases">
        <title>Arabidopsis ORF clones.</title>
        <authorList>
            <person name="Cheuk R.F."/>
            <person name="Chen H."/>
            <person name="Kim C.J."/>
            <person name="Shinn P."/>
            <person name="Ecker J.R."/>
        </authorList>
    </citation>
    <scope>NUCLEOTIDE SEQUENCE [LARGE SCALE MRNA]</scope>
    <source>
        <strain>cv. Columbia</strain>
    </source>
</reference>
<reference key="4">
    <citation type="submission" date="2004-09" db="EMBL/GenBank/DDBJ databases">
        <title>Large-scale analysis of RIKEN Arabidopsis full-length (RAFL) cDNAs.</title>
        <authorList>
            <person name="Totoki Y."/>
            <person name="Seki M."/>
            <person name="Ishida J."/>
            <person name="Nakajima M."/>
            <person name="Enju A."/>
            <person name="Kamiya A."/>
            <person name="Narusaka M."/>
            <person name="Shin-i T."/>
            <person name="Nakagawa M."/>
            <person name="Sakamoto N."/>
            <person name="Oishi K."/>
            <person name="Kohara Y."/>
            <person name="Kobayashi M."/>
            <person name="Toyoda A."/>
            <person name="Sakaki Y."/>
            <person name="Sakurai T."/>
            <person name="Iida K."/>
            <person name="Akiyama K."/>
            <person name="Satou M."/>
            <person name="Toyoda T."/>
            <person name="Konagaya A."/>
            <person name="Carninci P."/>
            <person name="Kawai J."/>
            <person name="Hayashizaki Y."/>
            <person name="Shinozaki K."/>
        </authorList>
    </citation>
    <scope>NUCLEOTIDE SEQUENCE [LARGE SCALE MRNA]</scope>
    <source>
        <strain>cv. Columbia</strain>
    </source>
</reference>
<reference key="5">
    <citation type="journal article" date="2009" name="J. Proteomics">
        <title>Phosphoproteomic analysis of nuclei-enriched fractions from Arabidopsis thaliana.</title>
        <authorList>
            <person name="Jones A.M.E."/>
            <person name="MacLean D."/>
            <person name="Studholme D.J."/>
            <person name="Serna-Sanz A."/>
            <person name="Andreasson E."/>
            <person name="Rathjen J.P."/>
            <person name="Peck S.C."/>
        </authorList>
    </citation>
    <scope>IDENTIFICATION BY MASS SPECTROMETRY [LARGE SCALE ANALYSIS]</scope>
</reference>
<reference key="6">
    <citation type="journal article" date="2009" name="Plant Physiol.">
        <title>Large-scale Arabidopsis phosphoproteome profiling reveals novel chloroplast kinase substrates and phosphorylation networks.</title>
        <authorList>
            <person name="Reiland S."/>
            <person name="Messerli G."/>
            <person name="Baerenfaller K."/>
            <person name="Gerrits B."/>
            <person name="Endler A."/>
            <person name="Grossmann J."/>
            <person name="Gruissem W."/>
            <person name="Baginsky S."/>
        </authorList>
    </citation>
    <scope>IDENTIFICATION BY MASS SPECTROMETRY [LARGE SCALE ANALYSIS]</scope>
</reference>
<reference key="7">
    <citation type="journal article" date="2017" name="Proc. Natl. Acad. Sci. U.S.A.">
        <title>Loss of GET pathway orthologs in Arabidopsis thaliana causes root hair growth defects and affects SNARE abundance.</title>
        <authorList>
            <person name="Xing S."/>
            <person name="Mehlhorn D.G."/>
            <person name="Wallmeroth N."/>
            <person name="Asseck L.Y."/>
            <person name="Kar R."/>
            <person name="Voss A."/>
            <person name="Denninger P."/>
            <person name="Schmidt V.A."/>
            <person name="Schwarzlaender M."/>
            <person name="Stierhof Y.D."/>
            <person name="Grossmann G."/>
            <person name="Grefen C."/>
        </authorList>
    </citation>
    <scope>FUNCTION</scope>
    <scope>INTERACTION WITH GET3A</scope>
    <scope>SUBCELLULAR LOCATION</scope>
    <scope>DISRUPTION PHENOTYPE</scope>
</reference>
<sequence length="324" mass="37177">MSRERIKRELPPVQEHIDKLRKVIEEGNYYGALQMYKSISARYVTAQRFSEALDILFSGACIELEHGLVNCGADLAILFVDTLVKAKSPCNDETLDRIRCIFKLFPRVPVPPHLVDVSDDEDVQNLQESLGEARSRVENLTSFLRAAIKWSAEFGGPRTGYPELHAMLGDYLYTECPELDMVRISRHFVRAEDPEKFASMLVNFMGRCYPGEDDLAIARAVLMYLSMGNMKDANFMMDEIKKQAETKNPELSESDLIQFISYLLETLQRDALPLFNMLRVKYKSSIDRDQLLNELLDEIAERFYGVQRKNPLQGMFGDIFKMMG</sequence>
<protein>
    <recommendedName>
        <fullName evidence="2">Protein GET4</fullName>
        <shortName evidence="2">AtGET4</shortName>
    </recommendedName>
    <alternativeName>
        <fullName evidence="3">Guided entry of tail-anchored proteins 4 homolog</fullName>
    </alternativeName>
</protein>
<gene>
    <name evidence="5" type="primary">MDC12.19</name>
    <name evidence="5" type="synonym">MDC12_19</name>
    <name evidence="4" type="ordered locus">At5g63220</name>
</gene>
<dbReference type="EMBL" id="AB008265">
    <property type="protein sequence ID" value="BAB10564.1"/>
    <property type="status" value="ALT_SEQ"/>
    <property type="molecule type" value="Genomic_DNA"/>
</dbReference>
<dbReference type="EMBL" id="CP002688">
    <property type="protein sequence ID" value="AED97719.1"/>
    <property type="molecule type" value="Genomic_DNA"/>
</dbReference>
<dbReference type="EMBL" id="BT014963">
    <property type="protein sequence ID" value="AAT47814.1"/>
    <property type="molecule type" value="mRNA"/>
</dbReference>
<dbReference type="EMBL" id="AK176227">
    <property type="protein sequence ID" value="BAD43990.1"/>
    <property type="molecule type" value="mRNA"/>
</dbReference>
<dbReference type="RefSeq" id="NP_201127.2">
    <property type="nucleotide sequence ID" value="NM_125717.6"/>
</dbReference>
<dbReference type="SMR" id="Q6GKV1"/>
<dbReference type="FunCoup" id="Q6GKV1">
    <property type="interactions" value="3791"/>
</dbReference>
<dbReference type="STRING" id="3702.Q6GKV1"/>
<dbReference type="iPTMnet" id="Q6GKV1"/>
<dbReference type="PaxDb" id="3702-AT5G63220.1"/>
<dbReference type="ProteomicsDB" id="193588"/>
<dbReference type="DNASU" id="836442"/>
<dbReference type="EnsemblPlants" id="AT5G63220.1">
    <property type="protein sequence ID" value="AT5G63220.1"/>
    <property type="gene ID" value="AT5G63220"/>
</dbReference>
<dbReference type="GeneID" id="836442"/>
<dbReference type="Gramene" id="AT5G63220.1">
    <property type="protein sequence ID" value="AT5G63220.1"/>
    <property type="gene ID" value="AT5G63220"/>
</dbReference>
<dbReference type="KEGG" id="ath:AT5G63220"/>
<dbReference type="Araport" id="AT5G63220"/>
<dbReference type="TAIR" id="AT5G63220">
    <property type="gene designation" value="GET4"/>
</dbReference>
<dbReference type="eggNOG" id="KOG3024">
    <property type="taxonomic scope" value="Eukaryota"/>
</dbReference>
<dbReference type="HOGENOM" id="CLU_046061_1_0_1"/>
<dbReference type="InParanoid" id="Q6GKV1"/>
<dbReference type="OMA" id="LMDMMGM"/>
<dbReference type="OrthoDB" id="10252405at2759"/>
<dbReference type="PhylomeDB" id="Q6GKV1"/>
<dbReference type="PRO" id="PR:Q6GKV1"/>
<dbReference type="Proteomes" id="UP000006548">
    <property type="component" value="Chromosome 5"/>
</dbReference>
<dbReference type="ExpressionAtlas" id="Q6GKV1">
    <property type="expression patterns" value="baseline and differential"/>
</dbReference>
<dbReference type="GO" id="GO:0005829">
    <property type="term" value="C:cytosol"/>
    <property type="evidence" value="ECO:0000314"/>
    <property type="project" value="TAIR"/>
</dbReference>
<dbReference type="GO" id="GO:0045048">
    <property type="term" value="P:protein insertion into ER membrane"/>
    <property type="evidence" value="ECO:0007669"/>
    <property type="project" value="InterPro"/>
</dbReference>
<dbReference type="GO" id="GO:0048767">
    <property type="term" value="P:root hair elongation"/>
    <property type="evidence" value="ECO:0000315"/>
    <property type="project" value="TAIR"/>
</dbReference>
<dbReference type="FunFam" id="1.25.40.10:FF:000387">
    <property type="entry name" value="Golgi to ER traffic protein 4"/>
    <property type="match status" value="1"/>
</dbReference>
<dbReference type="Gene3D" id="1.25.40.10">
    <property type="entry name" value="Tetratricopeptide repeat domain"/>
    <property type="match status" value="1"/>
</dbReference>
<dbReference type="InterPro" id="IPR007317">
    <property type="entry name" value="GET4"/>
</dbReference>
<dbReference type="InterPro" id="IPR011990">
    <property type="entry name" value="TPR-like_helical_dom_sf"/>
</dbReference>
<dbReference type="PANTHER" id="PTHR12875">
    <property type="entry name" value="GOLGI TO ER TRAFFIC PROTEIN 4 HOMOLOG"/>
    <property type="match status" value="1"/>
</dbReference>
<dbReference type="PANTHER" id="PTHR12875:SF0">
    <property type="entry name" value="GOLGI TO ER TRAFFIC PROTEIN 4 HOMOLOG"/>
    <property type="match status" value="1"/>
</dbReference>
<dbReference type="Pfam" id="PF04190">
    <property type="entry name" value="GET4"/>
    <property type="match status" value="1"/>
</dbReference>
<keyword id="KW-0963">Cytoplasm</keyword>
<keyword id="KW-1185">Reference proteome</keyword>
<accession>Q6GKV1</accession>
<accession>Q9FMK1</accession>
<evidence type="ECO:0000269" key="1">
    <source>
    </source>
</evidence>
<evidence type="ECO:0000303" key="2">
    <source>
    </source>
</evidence>
<evidence type="ECO:0000305" key="3"/>
<evidence type="ECO:0000312" key="4">
    <source>
        <dbReference type="Araport" id="AT5G63220"/>
    </source>
</evidence>
<evidence type="ECO:0000312" key="5">
    <source>
        <dbReference type="EMBL" id="AED97719.1"/>
    </source>
</evidence>
<organism>
    <name type="scientific">Arabidopsis thaliana</name>
    <name type="common">Mouse-ear cress</name>
    <dbReference type="NCBI Taxonomy" id="3702"/>
    <lineage>
        <taxon>Eukaryota</taxon>
        <taxon>Viridiplantae</taxon>
        <taxon>Streptophyta</taxon>
        <taxon>Embryophyta</taxon>
        <taxon>Tracheophyta</taxon>
        <taxon>Spermatophyta</taxon>
        <taxon>Magnoliopsida</taxon>
        <taxon>eudicotyledons</taxon>
        <taxon>Gunneridae</taxon>
        <taxon>Pentapetalae</taxon>
        <taxon>rosids</taxon>
        <taxon>malvids</taxon>
        <taxon>Brassicales</taxon>
        <taxon>Brassicaceae</taxon>
        <taxon>Camelineae</taxon>
        <taxon>Arabidopsis</taxon>
    </lineage>
</organism>
<proteinExistence type="evidence at protein level"/>